<sequence length="1397" mass="157239">MAQTGEDVDKAKSFQVEFACGNGVDDEEKLRSQWATVERLPTFKRVTTALLHTGDDSSDIIDVTKLEDAERRLLIEKLVKQIEADNLRLLRKIRKRIDEVGIELPTVEVRFNDLSVEAECQVVHGKPIPTLWNTIKGSLSKFVCSKKETKIGILKGVSGIVRPGRMTLLLGPPGCGKTTLLQALSGRLSHSVKVGGKVSYNGCLLSEFIPEKTSSYISQNDLHIPELSVRETLDFSACCQGIGSRMEIMKEISRREKLKEIVPDPDIDAYMKAISVEGLKNSMQTDYILKILGLDICADTRAGDATRPGISGGQKRRLTTGEIVVGPATTLLMDEISNGLDSSTTFQIVSCLQQLAHIAGATILISLLQPAPETFELFDDVILLGEGKIIYHAPRADICKFFEGCGFKCPERKGVADFLQEVMSRKDQEQYWCHRSKPYSYISVDSFIKKFNESNLGFLLKEELSKPFDKSQTRKDSLCFRKYSLSKWEMLKACSRREILLMKRNSFIYLFKSGLLVFNALVTMTVFLQAGATRDARHGNYLMGSMFTALFRLLADGLPELTLTISRLGVFCKQKDLYFYPAWAYAIPSIILRIPLSVLDSFIWTVLTYYVIGYSPEVGRFFRHFIILLTFHLSCISMFRAIASICRTFVACSITGAISVLLLALFGGFVIPKSSMPTWLGWGFWLSPLSYAEIGLTANEFFSPRWRKLTSGNITAGEQVLDVRGLNFGRHSYWTAFGALVGFVLFFNALYTLALTYRNNPQRSRAIVSHGKNSQCSEEDFKPCPEITSRAKTGKVILPFKPLTVTFQNVQYYIETPQGKTRQLLFDITGALKPGVLTSLMGVSGAGKTTLLDVLSGRKTRGIIKGEIRVGGYPKVQETFARVSGYCEQFDIHSPNITVEESLKYSAWLRLPYNIDAKTKNELVKEVLETVELEDIKDSMVGLPGISGLSTEQRKRLTIAVELVSNPSIIFLDEPTTGLDARAAAIVMRAVKNVAETGRTVVCTIHQPSIDIFETFDELILMKDGGQLVYYGPLGKHSSKVIKYFESIPGVPKVQKNCNPATWMLDITCKSAEHRLGMDFAQAYKDSTLYKENKMVVEQLSSASLGSEALSFPSRYSQTGWGQLKACLWKQHCSYWRNPSHNLTRIVFILLNSLLCSLLFWQKAKDINNQQDLFSIFGSMYTIVIFSGINNCATVMNFIATERNVFYRERFARMYSSWAYSFSQVLVEVPYSLLQSLLCTIIVYPMIGYHMSVYKMFWSLYSIFCSLLIFNYCGMLMVALTPNIHMALTLRSTFFSMVNLFAGFVMPKQKIPKWWIWMYYLSPTSWVLEGLLSSQYGDVEKEITVFGEKKSVSAFLEDYFGYKHDSLAVVAFVLIAFPIIVASLFAFFMSKLNFQKK</sequence>
<dbReference type="EMBL" id="BK001012">
    <property type="protein sequence ID" value="DAA00881.1"/>
    <property type="molecule type" value="Genomic_DNA"/>
</dbReference>
<dbReference type="EMBL" id="AL161540">
    <property type="status" value="NOT_ANNOTATED_CDS"/>
    <property type="molecule type" value="Genomic_DNA"/>
</dbReference>
<dbReference type="EMBL" id="CP002687">
    <property type="protein sequence ID" value="AEE83570.1"/>
    <property type="status" value="ALT_SEQ"/>
    <property type="molecule type" value="Genomic_DNA"/>
</dbReference>
<dbReference type="EMBL" id="CP002687">
    <property type="protein sequence ID" value="ANM67534.1"/>
    <property type="molecule type" value="Genomic_DNA"/>
</dbReference>
<dbReference type="RefSeq" id="NP_001329357.1">
    <property type="nucleotide sequence ID" value="NM_001341001.1"/>
</dbReference>
<dbReference type="RefSeq" id="NP_680692.1">
    <property type="nucleotide sequence ID" value="NM_148326.2"/>
</dbReference>
<dbReference type="SMR" id="Q7PC83"/>
<dbReference type="BioGRID" id="12483">
    <property type="interactions" value="2"/>
</dbReference>
<dbReference type="FunCoup" id="Q7PC83">
    <property type="interactions" value="347"/>
</dbReference>
<dbReference type="STRING" id="3702.Q7PC83"/>
<dbReference type="PaxDb" id="3702-AT4G15215.1"/>
<dbReference type="ProteomicsDB" id="244343"/>
<dbReference type="EnsemblPlants" id="AT4G15215.11">
    <property type="protein sequence ID" value="AT4G15215.11"/>
    <property type="gene ID" value="AT4G15215"/>
</dbReference>
<dbReference type="GeneID" id="827186"/>
<dbReference type="Gramene" id="AT4G15215.11">
    <property type="protein sequence ID" value="AT4G15215.11"/>
    <property type="gene ID" value="AT4G15215"/>
</dbReference>
<dbReference type="KEGG" id="ath:AT4G15215"/>
<dbReference type="Araport" id="AT4G15215"/>
<dbReference type="TAIR" id="AT4G15215">
    <property type="gene designation" value="ABCG41"/>
</dbReference>
<dbReference type="eggNOG" id="KOG0065">
    <property type="taxonomic scope" value="Eukaryota"/>
</dbReference>
<dbReference type="HOGENOM" id="CLU_000604_35_6_1"/>
<dbReference type="InParanoid" id="Q7PC83"/>
<dbReference type="PhylomeDB" id="Q7PC83"/>
<dbReference type="PRO" id="PR:Q7PC83"/>
<dbReference type="Proteomes" id="UP000006548">
    <property type="component" value="Chromosome 4"/>
</dbReference>
<dbReference type="ExpressionAtlas" id="Q7PC83">
    <property type="expression patterns" value="baseline and differential"/>
</dbReference>
<dbReference type="GO" id="GO:0005886">
    <property type="term" value="C:plasma membrane"/>
    <property type="evidence" value="ECO:0007669"/>
    <property type="project" value="UniProtKB-ARBA"/>
</dbReference>
<dbReference type="GO" id="GO:0140359">
    <property type="term" value="F:ABC-type transporter activity"/>
    <property type="evidence" value="ECO:0007669"/>
    <property type="project" value="InterPro"/>
</dbReference>
<dbReference type="GO" id="GO:0005524">
    <property type="term" value="F:ATP binding"/>
    <property type="evidence" value="ECO:0007669"/>
    <property type="project" value="UniProtKB-KW"/>
</dbReference>
<dbReference type="GO" id="GO:0016887">
    <property type="term" value="F:ATP hydrolysis activity"/>
    <property type="evidence" value="ECO:0007669"/>
    <property type="project" value="InterPro"/>
</dbReference>
<dbReference type="CDD" id="cd03232">
    <property type="entry name" value="ABCG_PDR_domain2"/>
    <property type="match status" value="1"/>
</dbReference>
<dbReference type="FunFam" id="3.40.50.300:FF:000157">
    <property type="entry name" value="ABC transporter G family member 34"/>
    <property type="match status" value="1"/>
</dbReference>
<dbReference type="FunFam" id="3.40.50.300:FF:000532">
    <property type="entry name" value="ABC transporter G family member 34"/>
    <property type="match status" value="1"/>
</dbReference>
<dbReference type="Gene3D" id="3.40.50.300">
    <property type="entry name" value="P-loop containing nucleotide triphosphate hydrolases"/>
    <property type="match status" value="2"/>
</dbReference>
<dbReference type="InterPro" id="IPR003593">
    <property type="entry name" value="AAA+_ATPase"/>
</dbReference>
<dbReference type="InterPro" id="IPR013525">
    <property type="entry name" value="ABC2_TM"/>
</dbReference>
<dbReference type="InterPro" id="IPR003439">
    <property type="entry name" value="ABC_transporter-like_ATP-bd"/>
</dbReference>
<dbReference type="InterPro" id="IPR043926">
    <property type="entry name" value="ABCG_dom"/>
</dbReference>
<dbReference type="InterPro" id="IPR034003">
    <property type="entry name" value="ABCG_PDR_2"/>
</dbReference>
<dbReference type="InterPro" id="IPR027417">
    <property type="entry name" value="P-loop_NTPase"/>
</dbReference>
<dbReference type="InterPro" id="IPR013581">
    <property type="entry name" value="PDR_assoc"/>
</dbReference>
<dbReference type="PANTHER" id="PTHR19241">
    <property type="entry name" value="ATP-BINDING CASSETTE TRANSPORTER"/>
    <property type="match status" value="1"/>
</dbReference>
<dbReference type="Pfam" id="PF01061">
    <property type="entry name" value="ABC2_membrane"/>
    <property type="match status" value="2"/>
</dbReference>
<dbReference type="Pfam" id="PF19055">
    <property type="entry name" value="ABC2_membrane_7"/>
    <property type="match status" value="1"/>
</dbReference>
<dbReference type="Pfam" id="PF00005">
    <property type="entry name" value="ABC_tran"/>
    <property type="match status" value="2"/>
</dbReference>
<dbReference type="Pfam" id="PF08370">
    <property type="entry name" value="PDR_assoc"/>
    <property type="match status" value="1"/>
</dbReference>
<dbReference type="SMART" id="SM00382">
    <property type="entry name" value="AAA"/>
    <property type="match status" value="2"/>
</dbReference>
<dbReference type="SUPFAM" id="SSF52540">
    <property type="entry name" value="P-loop containing nucleoside triphosphate hydrolases"/>
    <property type="match status" value="2"/>
</dbReference>
<dbReference type="PROSITE" id="PS50893">
    <property type="entry name" value="ABC_TRANSPORTER_2"/>
    <property type="match status" value="2"/>
</dbReference>
<accession>Q7PC83</accession>
<accession>F4JJF1</accession>
<organism>
    <name type="scientific">Arabidopsis thaliana</name>
    <name type="common">Mouse-ear cress</name>
    <dbReference type="NCBI Taxonomy" id="3702"/>
    <lineage>
        <taxon>Eukaryota</taxon>
        <taxon>Viridiplantae</taxon>
        <taxon>Streptophyta</taxon>
        <taxon>Embryophyta</taxon>
        <taxon>Tracheophyta</taxon>
        <taxon>Spermatophyta</taxon>
        <taxon>Magnoliopsida</taxon>
        <taxon>eudicotyledons</taxon>
        <taxon>Gunneridae</taxon>
        <taxon>Pentapetalae</taxon>
        <taxon>rosids</taxon>
        <taxon>malvids</taxon>
        <taxon>Brassicales</taxon>
        <taxon>Brassicaceae</taxon>
        <taxon>Camelineae</taxon>
        <taxon>Arabidopsis</taxon>
    </lineage>
</organism>
<proteinExistence type="evidence at transcript level"/>
<gene>
    <name type="primary">ABCG41</name>
    <name type="synonym">PDR13</name>
    <name type="ordered locus">At4g15215</name>
    <name type="ORF">FCAALL.459</name>
</gene>
<feature type="chain" id="PRO_0000234640" description="ABC transporter G family member 41">
    <location>
        <begin position="1"/>
        <end position="1397"/>
    </location>
</feature>
<feature type="transmembrane region" description="Helical" evidence="2">
    <location>
        <begin position="507"/>
        <end position="527"/>
    </location>
</feature>
<feature type="transmembrane region" description="Helical" evidence="2">
    <location>
        <begin position="549"/>
        <end position="570"/>
    </location>
</feature>
<feature type="transmembrane region" description="Helical" evidence="2">
    <location>
        <begin position="594"/>
        <end position="614"/>
    </location>
</feature>
<feature type="transmembrane region" description="Helical" evidence="2">
    <location>
        <begin position="625"/>
        <end position="645"/>
    </location>
</feature>
<feature type="transmembrane region" description="Helical" evidence="2">
    <location>
        <begin position="651"/>
        <end position="671"/>
    </location>
</feature>
<feature type="transmembrane region" description="Helical" evidence="2">
    <location>
        <begin position="735"/>
        <end position="755"/>
    </location>
</feature>
<feature type="transmembrane region" description="Helical" evidence="2">
    <location>
        <begin position="1141"/>
        <end position="1161"/>
    </location>
</feature>
<feature type="transmembrane region" description="Helical" evidence="2">
    <location>
        <begin position="1173"/>
        <end position="1193"/>
    </location>
</feature>
<feature type="transmembrane region" description="Helical" evidence="2">
    <location>
        <begin position="1229"/>
        <end position="1249"/>
    </location>
</feature>
<feature type="transmembrane region" description="Helical" evidence="2">
    <location>
        <begin position="1260"/>
        <end position="1280"/>
    </location>
</feature>
<feature type="transmembrane region" description="Helical" evidence="2">
    <location>
        <begin position="1286"/>
        <end position="1306"/>
    </location>
</feature>
<feature type="transmembrane region" description="Helical" evidence="2">
    <location>
        <begin position="1314"/>
        <end position="1334"/>
    </location>
</feature>
<feature type="transmembrane region" description="Helical" evidence="2">
    <location>
        <begin position="1369"/>
        <end position="1389"/>
    </location>
</feature>
<feature type="domain" description="ABC transporter 1" evidence="3">
    <location>
        <begin position="138"/>
        <end position="411"/>
    </location>
</feature>
<feature type="domain" description="ABC transmembrane type-2 1">
    <location>
        <begin position="489"/>
        <end position="701"/>
    </location>
</feature>
<feature type="domain" description="ABC transporter 2" evidence="3">
    <location>
        <begin position="805"/>
        <end position="1050"/>
    </location>
</feature>
<feature type="domain" description="ABC transmembrane type-2 2">
    <location>
        <begin position="1122"/>
        <end position="1336"/>
    </location>
</feature>
<feature type="binding site" evidence="3">
    <location>
        <begin position="171"/>
        <end position="178"/>
    </location>
    <ligand>
        <name>ATP</name>
        <dbReference type="ChEBI" id="CHEBI:30616"/>
        <label>1</label>
    </ligand>
</feature>
<feature type="binding site" evidence="3">
    <location>
        <begin position="842"/>
        <end position="849"/>
    </location>
    <ligand>
        <name>ATP</name>
        <dbReference type="ChEBI" id="CHEBI:30616"/>
        <label>2</label>
    </ligand>
</feature>
<name>AB41G_ARATH</name>
<reference key="1">
    <citation type="journal article" date="2002" name="Planta">
        <title>The plant PDR family of ABC transporters.</title>
        <authorList>
            <person name="van den Brule S."/>
            <person name="Smart C.C."/>
        </authorList>
    </citation>
    <scope>NUCLEOTIDE SEQUENCE [GENOMIC DNA]</scope>
    <scope>IDENTIFICATION</scope>
    <scope>TISSUE SPECIFICITY</scope>
</reference>
<reference key="2">
    <citation type="journal article" date="1999" name="Nature">
        <title>Sequence and analysis of chromosome 4 of the plant Arabidopsis thaliana.</title>
        <authorList>
            <person name="Mayer K.F.X."/>
            <person name="Schueller C."/>
            <person name="Wambutt R."/>
            <person name="Murphy G."/>
            <person name="Volckaert G."/>
            <person name="Pohl T."/>
            <person name="Duesterhoeft A."/>
            <person name="Stiekema W."/>
            <person name="Entian K.-D."/>
            <person name="Terryn N."/>
            <person name="Harris B."/>
            <person name="Ansorge W."/>
            <person name="Brandt P."/>
            <person name="Grivell L.A."/>
            <person name="Rieger M."/>
            <person name="Weichselgartner M."/>
            <person name="de Simone V."/>
            <person name="Obermaier B."/>
            <person name="Mache R."/>
            <person name="Mueller M."/>
            <person name="Kreis M."/>
            <person name="Delseny M."/>
            <person name="Puigdomenech P."/>
            <person name="Watson M."/>
            <person name="Schmidtheini T."/>
            <person name="Reichert B."/>
            <person name="Portetelle D."/>
            <person name="Perez-Alonso M."/>
            <person name="Boutry M."/>
            <person name="Bancroft I."/>
            <person name="Vos P."/>
            <person name="Hoheisel J."/>
            <person name="Zimmermann W."/>
            <person name="Wedler H."/>
            <person name="Ridley P."/>
            <person name="Langham S.-A."/>
            <person name="McCullagh B."/>
            <person name="Bilham L."/>
            <person name="Robben J."/>
            <person name="van der Schueren J."/>
            <person name="Grymonprez B."/>
            <person name="Chuang Y.-J."/>
            <person name="Vandenbussche F."/>
            <person name="Braeken M."/>
            <person name="Weltjens I."/>
            <person name="Voet M."/>
            <person name="Bastiaens I."/>
            <person name="Aert R."/>
            <person name="Defoor E."/>
            <person name="Weitzenegger T."/>
            <person name="Bothe G."/>
            <person name="Ramsperger U."/>
            <person name="Hilbert H."/>
            <person name="Braun M."/>
            <person name="Holzer E."/>
            <person name="Brandt A."/>
            <person name="Peters S."/>
            <person name="van Staveren M."/>
            <person name="Dirkse W."/>
            <person name="Mooijman P."/>
            <person name="Klein Lankhorst R."/>
            <person name="Rose M."/>
            <person name="Hauf J."/>
            <person name="Koetter P."/>
            <person name="Berneiser S."/>
            <person name="Hempel S."/>
            <person name="Feldpausch M."/>
            <person name="Lamberth S."/>
            <person name="Van den Daele H."/>
            <person name="De Keyser A."/>
            <person name="Buysshaert C."/>
            <person name="Gielen J."/>
            <person name="Villarroel R."/>
            <person name="De Clercq R."/>
            <person name="van Montagu M."/>
            <person name="Rogers J."/>
            <person name="Cronin A."/>
            <person name="Quail M.A."/>
            <person name="Bray-Allen S."/>
            <person name="Clark L."/>
            <person name="Doggett J."/>
            <person name="Hall S."/>
            <person name="Kay M."/>
            <person name="Lennard N."/>
            <person name="McLay K."/>
            <person name="Mayes R."/>
            <person name="Pettett A."/>
            <person name="Rajandream M.A."/>
            <person name="Lyne M."/>
            <person name="Benes V."/>
            <person name="Rechmann S."/>
            <person name="Borkova D."/>
            <person name="Bloecker H."/>
            <person name="Scharfe M."/>
            <person name="Grimm M."/>
            <person name="Loehnert T.-H."/>
            <person name="Dose S."/>
            <person name="de Haan M."/>
            <person name="Maarse A.C."/>
            <person name="Schaefer M."/>
            <person name="Mueller-Auer S."/>
            <person name="Gabel C."/>
            <person name="Fuchs M."/>
            <person name="Fartmann B."/>
            <person name="Granderath K."/>
            <person name="Dauner D."/>
            <person name="Herzl A."/>
            <person name="Neumann S."/>
            <person name="Argiriou A."/>
            <person name="Vitale D."/>
            <person name="Liguori R."/>
            <person name="Piravandi E."/>
            <person name="Massenet O."/>
            <person name="Quigley F."/>
            <person name="Clabauld G."/>
            <person name="Muendlein A."/>
            <person name="Felber R."/>
            <person name="Schnabl S."/>
            <person name="Hiller R."/>
            <person name="Schmidt W."/>
            <person name="Lecharny A."/>
            <person name="Aubourg S."/>
            <person name="Chefdor F."/>
            <person name="Cooke R."/>
            <person name="Berger C."/>
            <person name="Monfort A."/>
            <person name="Casacuberta E."/>
            <person name="Gibbons T."/>
            <person name="Weber N."/>
            <person name="Vandenbol M."/>
            <person name="Bargues M."/>
            <person name="Terol J."/>
            <person name="Torres A."/>
            <person name="Perez-Perez A."/>
            <person name="Purnelle B."/>
            <person name="Bent E."/>
            <person name="Johnson S."/>
            <person name="Tacon D."/>
            <person name="Jesse T."/>
            <person name="Heijnen L."/>
            <person name="Schwarz S."/>
            <person name="Scholler P."/>
            <person name="Heber S."/>
            <person name="Francs P."/>
            <person name="Bielke C."/>
            <person name="Frishman D."/>
            <person name="Haase D."/>
            <person name="Lemcke K."/>
            <person name="Mewes H.-W."/>
            <person name="Stocker S."/>
            <person name="Zaccaria P."/>
            <person name="Bevan M."/>
            <person name="Wilson R.K."/>
            <person name="de la Bastide M."/>
            <person name="Habermann K."/>
            <person name="Parnell L."/>
            <person name="Dedhia N."/>
            <person name="Gnoj L."/>
            <person name="Schutz K."/>
            <person name="Huang E."/>
            <person name="Spiegel L."/>
            <person name="Sekhon M."/>
            <person name="Murray J."/>
            <person name="Sheet P."/>
            <person name="Cordes M."/>
            <person name="Abu-Threideh J."/>
            <person name="Stoneking T."/>
            <person name="Kalicki J."/>
            <person name="Graves T."/>
            <person name="Harmon G."/>
            <person name="Edwards J."/>
            <person name="Latreille P."/>
            <person name="Courtney L."/>
            <person name="Cloud J."/>
            <person name="Abbott A."/>
            <person name="Scott K."/>
            <person name="Johnson D."/>
            <person name="Minx P."/>
            <person name="Bentley D."/>
            <person name="Fulton B."/>
            <person name="Miller N."/>
            <person name="Greco T."/>
            <person name="Kemp K."/>
            <person name="Kramer J."/>
            <person name="Fulton L."/>
            <person name="Mardis E."/>
            <person name="Dante M."/>
            <person name="Pepin K."/>
            <person name="Hillier L.W."/>
            <person name="Nelson J."/>
            <person name="Spieth J."/>
            <person name="Ryan E."/>
            <person name="Andrews S."/>
            <person name="Geisel C."/>
            <person name="Layman D."/>
            <person name="Du H."/>
            <person name="Ali J."/>
            <person name="Berghoff A."/>
            <person name="Jones K."/>
            <person name="Drone K."/>
            <person name="Cotton M."/>
            <person name="Joshu C."/>
            <person name="Antonoiu B."/>
            <person name="Zidanic M."/>
            <person name="Strong C."/>
            <person name="Sun H."/>
            <person name="Lamar B."/>
            <person name="Yordan C."/>
            <person name="Ma P."/>
            <person name="Zhong J."/>
            <person name="Preston R."/>
            <person name="Vil D."/>
            <person name="Shekher M."/>
            <person name="Matero A."/>
            <person name="Shah R."/>
            <person name="Swaby I.K."/>
            <person name="O'Shaughnessy A."/>
            <person name="Rodriguez M."/>
            <person name="Hoffman J."/>
            <person name="Till S."/>
            <person name="Granat S."/>
            <person name="Shohdy N."/>
            <person name="Hasegawa A."/>
            <person name="Hameed A."/>
            <person name="Lodhi M."/>
            <person name="Johnson A."/>
            <person name="Chen E."/>
            <person name="Marra M.A."/>
            <person name="Martienssen R."/>
            <person name="McCombie W.R."/>
        </authorList>
    </citation>
    <scope>NUCLEOTIDE SEQUENCE [LARGE SCALE GENOMIC DNA]</scope>
    <source>
        <strain>cv. Columbia</strain>
    </source>
</reference>
<reference key="3">
    <citation type="journal article" date="2017" name="Plant J.">
        <title>Araport11: a complete reannotation of the Arabidopsis thaliana reference genome.</title>
        <authorList>
            <person name="Cheng C.Y."/>
            <person name="Krishnakumar V."/>
            <person name="Chan A.P."/>
            <person name="Thibaud-Nissen F."/>
            <person name="Schobel S."/>
            <person name="Town C.D."/>
        </authorList>
    </citation>
    <scope>GENOME REANNOTATION</scope>
    <source>
        <strain>cv. Columbia</strain>
    </source>
</reference>
<reference key="4">
    <citation type="journal article" date="2006" name="FEBS Lett.">
        <title>Organization and function of the plant pleiotropic drug resistance ABC transporter family.</title>
        <authorList>
            <person name="Crouzet J."/>
            <person name="Trombik T."/>
            <person name="Fraysse A.S."/>
            <person name="Boutry M."/>
        </authorList>
    </citation>
    <scope>GENE FAMILY</scope>
    <scope>NOMENCLATURE</scope>
</reference>
<reference key="5">
    <citation type="journal article" date="2008" name="Trends Plant Sci.">
        <title>Plant ABC proteins - a unified nomenclature and updated inventory.</title>
        <authorList>
            <person name="Verrier P.J."/>
            <person name="Bird D."/>
            <person name="Burla B."/>
            <person name="Dassa E."/>
            <person name="Forestier C."/>
            <person name="Geisler M."/>
            <person name="Klein M."/>
            <person name="Kolukisaoglu H.U."/>
            <person name="Lee Y."/>
            <person name="Martinoia E."/>
            <person name="Murphy A."/>
            <person name="Rea P.A."/>
            <person name="Samuels L."/>
            <person name="Schulz B."/>
            <person name="Spalding E.J."/>
            <person name="Yazaki K."/>
            <person name="Theodoulou F.L."/>
        </authorList>
    </citation>
    <scope>GENE FAMILY</scope>
    <scope>NOMENCLATURE</scope>
</reference>
<comment type="function">
    <text evidence="1">May be a general defense protein.</text>
</comment>
<comment type="subcellular location">
    <subcellularLocation>
        <location evidence="1">Membrane</location>
        <topology evidence="1">Multi-pass membrane protein</topology>
    </subcellularLocation>
</comment>
<comment type="tissue specificity">
    <text evidence="4">Confined to roots.</text>
</comment>
<comment type="similarity">
    <text evidence="5">Belongs to the ABC transporter superfamily. ABCG family. PDR (TC 3.A.1.205) subfamily.</text>
</comment>
<comment type="sequence caution" evidence="5">
    <conflict type="erroneous gene model prediction">
        <sequence resource="EMBL-CDS" id="AEE83570"/>
    </conflict>
</comment>
<protein>
    <recommendedName>
        <fullName>ABC transporter G family member 41</fullName>
        <shortName>ABC transporter ABCG.41</shortName>
        <shortName>AtABCG41</shortName>
    </recommendedName>
    <alternativeName>
        <fullName>Pleiotropic drug resistance protein 13</fullName>
    </alternativeName>
</protein>
<keyword id="KW-0067">ATP-binding</keyword>
<keyword id="KW-0472">Membrane</keyword>
<keyword id="KW-0547">Nucleotide-binding</keyword>
<keyword id="KW-1185">Reference proteome</keyword>
<keyword id="KW-0677">Repeat</keyword>
<keyword id="KW-0812">Transmembrane</keyword>
<keyword id="KW-1133">Transmembrane helix</keyword>
<keyword id="KW-0813">Transport</keyword>
<evidence type="ECO:0000250" key="1"/>
<evidence type="ECO:0000255" key="2"/>
<evidence type="ECO:0000255" key="3">
    <source>
        <dbReference type="PROSITE-ProRule" id="PRU00434"/>
    </source>
</evidence>
<evidence type="ECO:0000269" key="4">
    <source>
    </source>
</evidence>
<evidence type="ECO:0000305" key="5"/>